<organism>
    <name type="scientific">Bacillus cereus (strain ZK / E33L)</name>
    <dbReference type="NCBI Taxonomy" id="288681"/>
    <lineage>
        <taxon>Bacteria</taxon>
        <taxon>Bacillati</taxon>
        <taxon>Bacillota</taxon>
        <taxon>Bacilli</taxon>
        <taxon>Bacillales</taxon>
        <taxon>Bacillaceae</taxon>
        <taxon>Bacillus</taxon>
        <taxon>Bacillus cereus group</taxon>
    </lineage>
</organism>
<gene>
    <name evidence="1" type="primary">leuC</name>
    <name type="ordered locus">BCE33L1287</name>
</gene>
<protein>
    <recommendedName>
        <fullName evidence="1">3-isopropylmalate dehydratase large subunit</fullName>
        <ecNumber evidence="1">4.2.1.33</ecNumber>
    </recommendedName>
    <alternativeName>
        <fullName evidence="1">Alpha-IPM isomerase</fullName>
        <shortName evidence="1">IPMI</shortName>
    </alternativeName>
    <alternativeName>
        <fullName evidence="1">Isopropylmalate isomerase</fullName>
    </alternativeName>
</protein>
<comment type="function">
    <text evidence="1">Catalyzes the isomerization between 2-isopropylmalate and 3-isopropylmalate, via the formation of 2-isopropylmaleate.</text>
</comment>
<comment type="catalytic activity">
    <reaction evidence="1">
        <text>(2R,3S)-3-isopropylmalate = (2S)-2-isopropylmalate</text>
        <dbReference type="Rhea" id="RHEA:32287"/>
        <dbReference type="ChEBI" id="CHEBI:1178"/>
        <dbReference type="ChEBI" id="CHEBI:35121"/>
        <dbReference type="EC" id="4.2.1.33"/>
    </reaction>
</comment>
<comment type="cofactor">
    <cofactor evidence="1">
        <name>[4Fe-4S] cluster</name>
        <dbReference type="ChEBI" id="CHEBI:49883"/>
    </cofactor>
    <text evidence="1">Binds 1 [4Fe-4S] cluster per subunit.</text>
</comment>
<comment type="pathway">
    <text evidence="1">Amino-acid biosynthesis; L-leucine biosynthesis; L-leucine from 3-methyl-2-oxobutanoate: step 2/4.</text>
</comment>
<comment type="subunit">
    <text evidence="1">Heterodimer of LeuC and LeuD.</text>
</comment>
<comment type="similarity">
    <text evidence="1">Belongs to the aconitase/IPM isomerase family. LeuC type 1 subfamily.</text>
</comment>
<evidence type="ECO:0000255" key="1">
    <source>
        <dbReference type="HAMAP-Rule" id="MF_01026"/>
    </source>
</evidence>
<proteinExistence type="inferred from homology"/>
<dbReference type="EC" id="4.2.1.33" evidence="1"/>
<dbReference type="EMBL" id="CP000001">
    <property type="protein sequence ID" value="AAU18961.1"/>
    <property type="molecule type" value="Genomic_DNA"/>
</dbReference>
<dbReference type="RefSeq" id="WP_000518090.1">
    <property type="nucleotide sequence ID" value="NZ_CP009968.1"/>
</dbReference>
<dbReference type="SMR" id="Q63DX6"/>
<dbReference type="KEGG" id="bcz:BCE33L1287"/>
<dbReference type="PATRIC" id="fig|288681.22.peg.4267"/>
<dbReference type="UniPathway" id="UPA00048">
    <property type="reaction ID" value="UER00071"/>
</dbReference>
<dbReference type="Proteomes" id="UP000002612">
    <property type="component" value="Chromosome"/>
</dbReference>
<dbReference type="GO" id="GO:0003861">
    <property type="term" value="F:3-isopropylmalate dehydratase activity"/>
    <property type="evidence" value="ECO:0007669"/>
    <property type="project" value="UniProtKB-UniRule"/>
</dbReference>
<dbReference type="GO" id="GO:0051539">
    <property type="term" value="F:4 iron, 4 sulfur cluster binding"/>
    <property type="evidence" value="ECO:0007669"/>
    <property type="project" value="UniProtKB-KW"/>
</dbReference>
<dbReference type="GO" id="GO:0046872">
    <property type="term" value="F:metal ion binding"/>
    <property type="evidence" value="ECO:0007669"/>
    <property type="project" value="UniProtKB-KW"/>
</dbReference>
<dbReference type="GO" id="GO:0009098">
    <property type="term" value="P:L-leucine biosynthetic process"/>
    <property type="evidence" value="ECO:0007669"/>
    <property type="project" value="UniProtKB-UniRule"/>
</dbReference>
<dbReference type="CDD" id="cd01583">
    <property type="entry name" value="IPMI"/>
    <property type="match status" value="1"/>
</dbReference>
<dbReference type="FunFam" id="3.30.499.10:FF:000007">
    <property type="entry name" value="3-isopropylmalate dehydratase large subunit"/>
    <property type="match status" value="1"/>
</dbReference>
<dbReference type="Gene3D" id="3.30.499.10">
    <property type="entry name" value="Aconitase, domain 3"/>
    <property type="match status" value="2"/>
</dbReference>
<dbReference type="HAMAP" id="MF_01026">
    <property type="entry name" value="LeuC_type1"/>
    <property type="match status" value="1"/>
</dbReference>
<dbReference type="InterPro" id="IPR004430">
    <property type="entry name" value="3-IsopropMal_deHydase_lsu"/>
</dbReference>
<dbReference type="InterPro" id="IPR015931">
    <property type="entry name" value="Acnase/IPM_dHydase_lsu_aba_1/3"/>
</dbReference>
<dbReference type="InterPro" id="IPR001030">
    <property type="entry name" value="Acoase/IPM_deHydtase_lsu_aba"/>
</dbReference>
<dbReference type="InterPro" id="IPR018136">
    <property type="entry name" value="Aconitase_4Fe-4S_BS"/>
</dbReference>
<dbReference type="InterPro" id="IPR036008">
    <property type="entry name" value="Aconitase_4Fe-4S_dom"/>
</dbReference>
<dbReference type="InterPro" id="IPR050067">
    <property type="entry name" value="IPM_dehydratase_rel_enz"/>
</dbReference>
<dbReference type="InterPro" id="IPR033941">
    <property type="entry name" value="IPMI_cat"/>
</dbReference>
<dbReference type="NCBIfam" id="TIGR00170">
    <property type="entry name" value="leuC"/>
    <property type="match status" value="1"/>
</dbReference>
<dbReference type="NCBIfam" id="NF004016">
    <property type="entry name" value="PRK05478.1"/>
    <property type="match status" value="1"/>
</dbReference>
<dbReference type="NCBIfam" id="NF009116">
    <property type="entry name" value="PRK12466.1"/>
    <property type="match status" value="1"/>
</dbReference>
<dbReference type="PANTHER" id="PTHR43822:SF9">
    <property type="entry name" value="3-ISOPROPYLMALATE DEHYDRATASE"/>
    <property type="match status" value="1"/>
</dbReference>
<dbReference type="PANTHER" id="PTHR43822">
    <property type="entry name" value="HOMOACONITASE, MITOCHONDRIAL-RELATED"/>
    <property type="match status" value="1"/>
</dbReference>
<dbReference type="Pfam" id="PF00330">
    <property type="entry name" value="Aconitase"/>
    <property type="match status" value="1"/>
</dbReference>
<dbReference type="PRINTS" id="PR00415">
    <property type="entry name" value="ACONITASE"/>
</dbReference>
<dbReference type="SUPFAM" id="SSF53732">
    <property type="entry name" value="Aconitase iron-sulfur domain"/>
    <property type="match status" value="1"/>
</dbReference>
<dbReference type="PROSITE" id="PS00450">
    <property type="entry name" value="ACONITASE_1"/>
    <property type="match status" value="1"/>
</dbReference>
<dbReference type="PROSITE" id="PS01244">
    <property type="entry name" value="ACONITASE_2"/>
    <property type="match status" value="1"/>
</dbReference>
<sequence>MGKRLLDKLWEKHVVTTNENGLDLLYIDLHLVHEVTSPQAFEGLRLTNRKVRRPDLTFATMDHNIPTKDVWNITDRIAKQQLDTLRENCKQFQVPLADIGDEEQGIVHVIGPELGLTQPGKTIVCGDSHTATHGAFGALAFGIGTSEVEHVLATQTLWQRKPKAMGIELKGKLQKGVYAKDIILHLLSKYGVAVGTGYVMEFYGETIGAMEMEERMTLCNMAIEGGAKAGIIAPDEKTFAYVKGRKYAPRDYETFEKKWSELYTDADAIYDLHISIDVTDLAPYVTWGTNPSMGVRIDEKLPEKHDVNDERAFSYMGLSPGQSTYDIPVQHVFIGSCTNSRLSDLEIAAAVVKGRKVKEGVRALVVPGSKRVRDAAMQKGLHHIFEEAGFEWREPGCSMCLGMNPDQVPEGEHCASTSNRNFEGRQGKGARTHLVSPAMAAAAALYGHFVDTRKESYDGAISYS</sequence>
<accession>Q63DX6</accession>
<feature type="chain" id="PRO_0000076696" description="3-isopropylmalate dehydratase large subunit">
    <location>
        <begin position="1"/>
        <end position="464"/>
    </location>
</feature>
<feature type="binding site" evidence="1">
    <location>
        <position position="337"/>
    </location>
    <ligand>
        <name>[4Fe-4S] cluster</name>
        <dbReference type="ChEBI" id="CHEBI:49883"/>
    </ligand>
</feature>
<feature type="binding site" evidence="1">
    <location>
        <position position="397"/>
    </location>
    <ligand>
        <name>[4Fe-4S] cluster</name>
        <dbReference type="ChEBI" id="CHEBI:49883"/>
    </ligand>
</feature>
<feature type="binding site" evidence="1">
    <location>
        <position position="400"/>
    </location>
    <ligand>
        <name>[4Fe-4S] cluster</name>
        <dbReference type="ChEBI" id="CHEBI:49883"/>
    </ligand>
</feature>
<name>LEUC_BACCZ</name>
<reference key="1">
    <citation type="journal article" date="2006" name="J. Bacteriol.">
        <title>Pathogenomic sequence analysis of Bacillus cereus and Bacillus thuringiensis isolates closely related to Bacillus anthracis.</title>
        <authorList>
            <person name="Han C.S."/>
            <person name="Xie G."/>
            <person name="Challacombe J.F."/>
            <person name="Altherr M.R."/>
            <person name="Bhotika S.S."/>
            <person name="Bruce D."/>
            <person name="Campbell C.S."/>
            <person name="Campbell M.L."/>
            <person name="Chen J."/>
            <person name="Chertkov O."/>
            <person name="Cleland C."/>
            <person name="Dimitrijevic M."/>
            <person name="Doggett N.A."/>
            <person name="Fawcett J.J."/>
            <person name="Glavina T."/>
            <person name="Goodwin L.A."/>
            <person name="Hill K.K."/>
            <person name="Hitchcock P."/>
            <person name="Jackson P.J."/>
            <person name="Keim P."/>
            <person name="Kewalramani A.R."/>
            <person name="Longmire J."/>
            <person name="Lucas S."/>
            <person name="Malfatti S."/>
            <person name="McMurry K."/>
            <person name="Meincke L.J."/>
            <person name="Misra M."/>
            <person name="Moseman B.L."/>
            <person name="Mundt M."/>
            <person name="Munk A.C."/>
            <person name="Okinaka R.T."/>
            <person name="Parson-Quintana B."/>
            <person name="Reilly L.P."/>
            <person name="Richardson P."/>
            <person name="Robinson D.L."/>
            <person name="Rubin E."/>
            <person name="Saunders E."/>
            <person name="Tapia R."/>
            <person name="Tesmer J.G."/>
            <person name="Thayer N."/>
            <person name="Thompson L.S."/>
            <person name="Tice H."/>
            <person name="Ticknor L.O."/>
            <person name="Wills P.L."/>
            <person name="Brettin T.S."/>
            <person name="Gilna P."/>
        </authorList>
    </citation>
    <scope>NUCLEOTIDE SEQUENCE [LARGE SCALE GENOMIC DNA]</scope>
    <source>
        <strain>ZK / E33L</strain>
    </source>
</reference>
<keyword id="KW-0004">4Fe-4S</keyword>
<keyword id="KW-0028">Amino-acid biosynthesis</keyword>
<keyword id="KW-0100">Branched-chain amino acid biosynthesis</keyword>
<keyword id="KW-0408">Iron</keyword>
<keyword id="KW-0411">Iron-sulfur</keyword>
<keyword id="KW-0432">Leucine biosynthesis</keyword>
<keyword id="KW-0456">Lyase</keyword>
<keyword id="KW-0479">Metal-binding</keyword>